<dbReference type="EC" id="2.7.7.-" evidence="2"/>
<dbReference type="EMBL" id="CP001401">
    <property type="protein sequence ID" value="ACP55124.1"/>
    <property type="molecule type" value="Genomic_DNA"/>
</dbReference>
<dbReference type="RefSeq" id="WP_012711195.1">
    <property type="nucleotide sequence ID" value="NC_012632.1"/>
</dbReference>
<dbReference type="SMR" id="C3N549"/>
<dbReference type="GeneID" id="84058561"/>
<dbReference type="KEGG" id="sim:M1627_1237"/>
<dbReference type="HOGENOM" id="CLU_056123_0_0_2"/>
<dbReference type="Proteomes" id="UP000002307">
    <property type="component" value="Chromosome"/>
</dbReference>
<dbReference type="GO" id="GO:0000428">
    <property type="term" value="C:DNA-directed RNA polymerase complex"/>
    <property type="evidence" value="ECO:0007669"/>
    <property type="project" value="UniProtKB-KW"/>
</dbReference>
<dbReference type="GO" id="GO:1990077">
    <property type="term" value="C:primosome complex"/>
    <property type="evidence" value="ECO:0007669"/>
    <property type="project" value="UniProtKB-KW"/>
</dbReference>
<dbReference type="GO" id="GO:0003899">
    <property type="term" value="F:DNA-directed RNA polymerase activity"/>
    <property type="evidence" value="ECO:0007669"/>
    <property type="project" value="InterPro"/>
</dbReference>
<dbReference type="GO" id="GO:0046872">
    <property type="term" value="F:metal ion binding"/>
    <property type="evidence" value="ECO:0007669"/>
    <property type="project" value="UniProtKB-KW"/>
</dbReference>
<dbReference type="GO" id="GO:0006269">
    <property type="term" value="P:DNA replication, synthesis of primer"/>
    <property type="evidence" value="ECO:0007669"/>
    <property type="project" value="UniProtKB-UniRule"/>
</dbReference>
<dbReference type="CDD" id="cd04860">
    <property type="entry name" value="AE_Prim_S"/>
    <property type="match status" value="1"/>
</dbReference>
<dbReference type="FunFam" id="3.90.920.10:FF:000006">
    <property type="entry name" value="DNA primase small subunit PriS"/>
    <property type="match status" value="1"/>
</dbReference>
<dbReference type="Gene3D" id="3.90.920.10">
    <property type="entry name" value="DNA primase, PRIM domain"/>
    <property type="match status" value="1"/>
</dbReference>
<dbReference type="HAMAP" id="MF_00700">
    <property type="entry name" value="DNA_primase_sml_arc"/>
    <property type="match status" value="1"/>
</dbReference>
<dbReference type="InterPro" id="IPR002755">
    <property type="entry name" value="DNA_primase_S"/>
</dbReference>
<dbReference type="InterPro" id="IPR014052">
    <property type="entry name" value="DNA_primase_ssu_euk/arc"/>
</dbReference>
<dbReference type="InterPro" id="IPR023639">
    <property type="entry name" value="DNA_primase_ssu_PriS"/>
</dbReference>
<dbReference type="NCBIfam" id="NF001641">
    <property type="entry name" value="PRK00419.1-3"/>
    <property type="match status" value="1"/>
</dbReference>
<dbReference type="PANTHER" id="PTHR10536">
    <property type="entry name" value="DNA PRIMASE SMALL SUBUNIT"/>
    <property type="match status" value="1"/>
</dbReference>
<dbReference type="Pfam" id="PF01896">
    <property type="entry name" value="DNA_primase_S"/>
    <property type="match status" value="1"/>
</dbReference>
<dbReference type="Pfam" id="PF20873">
    <property type="entry name" value="PriS_C"/>
    <property type="match status" value="1"/>
</dbReference>
<dbReference type="SUPFAM" id="SSF56747">
    <property type="entry name" value="Prim-pol domain"/>
    <property type="match status" value="1"/>
</dbReference>
<comment type="function">
    <text evidence="2">Catalytic subunit of DNA primase, an RNA polymerase that catalyzes the synthesis of short RNA molecules used as primers for DNA polymerase during DNA replication. The small subunit contains the primase catalytic core and has DNA synthesis activity on its own. Binding to the large subunit stabilizes and modulates the activity, increasing the rate of DNA synthesis while decreasing the length of the DNA fragments, and conferring RNA synthesis capability. The DNA polymerase activity may enable DNA primase to also catalyze primer extension after primer synthesis. May also play a role in DNA repair.</text>
</comment>
<comment type="cofactor">
    <cofactor evidence="2">
        <name>Mg(2+)</name>
        <dbReference type="ChEBI" id="CHEBI:18420"/>
    </cofactor>
    <cofactor evidence="2">
        <name>Mn(2+)</name>
        <dbReference type="ChEBI" id="CHEBI:29035"/>
    </cofactor>
</comment>
<comment type="subunit">
    <text evidence="2">Heterodimer of a small subunit (PriS) and a large subunit (PriL).</text>
</comment>
<comment type="similarity">
    <text evidence="2">Belongs to the eukaryotic-type primase small subunit family.</text>
</comment>
<protein>
    <recommendedName>
        <fullName evidence="2">DNA primase small subunit PriS</fullName>
        <ecNumber evidence="2">2.7.7.-</ecNumber>
    </recommendedName>
</protein>
<proteinExistence type="inferred from homology"/>
<feature type="chain" id="PRO_1000212636" description="DNA primase small subunit PriS">
    <location>
        <begin position="1"/>
        <end position="330"/>
    </location>
</feature>
<feature type="active site" evidence="2">
    <location>
        <position position="101"/>
    </location>
</feature>
<feature type="active site" evidence="2">
    <location>
        <position position="103"/>
    </location>
</feature>
<feature type="active site" evidence="2">
    <location>
        <position position="235"/>
    </location>
</feature>
<feature type="binding site" evidence="1">
    <location>
        <position position="116"/>
    </location>
    <ligand>
        <name>Zn(2+)</name>
        <dbReference type="ChEBI" id="CHEBI:29105"/>
    </ligand>
</feature>
<feature type="binding site" evidence="1">
    <location>
        <position position="119"/>
    </location>
    <ligand>
        <name>Zn(2+)</name>
        <dbReference type="ChEBI" id="CHEBI:29105"/>
    </ligand>
</feature>
<feature type="binding site" evidence="1">
    <location>
        <position position="128"/>
    </location>
    <ligand>
        <name>Zn(2+)</name>
        <dbReference type="ChEBI" id="CHEBI:29105"/>
    </ligand>
</feature>
<feature type="binding site" evidence="1">
    <location>
        <position position="131"/>
    </location>
    <ligand>
        <name>Zn(2+)</name>
        <dbReference type="ChEBI" id="CHEBI:29105"/>
    </ligand>
</feature>
<gene>
    <name evidence="2" type="primary">priS</name>
    <name type="synonym">priA</name>
    <name type="ordered locus">M1627_1237</name>
</gene>
<accession>C3N549</accession>
<evidence type="ECO:0000250" key="1"/>
<evidence type="ECO:0000255" key="2">
    <source>
        <dbReference type="HAMAP-Rule" id="MF_00700"/>
    </source>
</evidence>
<organism>
    <name type="scientific">Saccharolobus islandicus (strain M.16.27)</name>
    <name type="common">Sulfolobus islandicus</name>
    <dbReference type="NCBI Taxonomy" id="427318"/>
    <lineage>
        <taxon>Archaea</taxon>
        <taxon>Thermoproteota</taxon>
        <taxon>Thermoprotei</taxon>
        <taxon>Sulfolobales</taxon>
        <taxon>Sulfolobaceae</taxon>
        <taxon>Saccharolobus</taxon>
    </lineage>
</organism>
<sequence>MGTFTLHQGQSNLIKSFFRNYYLNAELGLPNDMELREFALQPFGSDTYIRHLSFSSSEELRDYLVNRNLPLHLFYSSARYQLPAARDMEEKAWMGSDLLFDIDADHICKLRSIRFCPVCGNAITSEKCERDNVETLEYVEMTSECIKRGLEEARNLVEILEDDFGLKPKVYFSGNRGFHVQVDCYGDCALLDSDERKEIAEYVMGVGVPSYPGGGENAPGWVGRKNRGINGVTIDGQVTIDVKRLIRIPNSLHGKSGLIVKEVTNLDDFEFNEALSPFTGYTIFLPYISIETEVLSRNIKLNRGVPIKIESSIGIYLHLKNLGEVKAYVR</sequence>
<reference key="1">
    <citation type="journal article" date="2009" name="Proc. Natl. Acad. Sci. U.S.A.">
        <title>Biogeography of the Sulfolobus islandicus pan-genome.</title>
        <authorList>
            <person name="Reno M.L."/>
            <person name="Held N.L."/>
            <person name="Fields C.J."/>
            <person name="Burke P.V."/>
            <person name="Whitaker R.J."/>
        </authorList>
    </citation>
    <scope>NUCLEOTIDE SEQUENCE [LARGE SCALE GENOMIC DNA]</scope>
    <source>
        <strain>M.16.27</strain>
    </source>
</reference>
<keyword id="KW-0235">DNA replication</keyword>
<keyword id="KW-0240">DNA-directed RNA polymerase</keyword>
<keyword id="KW-0460">Magnesium</keyword>
<keyword id="KW-0464">Manganese</keyword>
<keyword id="KW-0479">Metal-binding</keyword>
<keyword id="KW-0548">Nucleotidyltransferase</keyword>
<keyword id="KW-0639">Primosome</keyword>
<keyword id="KW-0804">Transcription</keyword>
<keyword id="KW-0808">Transferase</keyword>
<keyword id="KW-0862">Zinc</keyword>
<name>PRIS_SACI3</name>